<feature type="chain" id="PRO_1000187281" description="Glyoxylate/hydroxypyruvate reductase A">
    <location>
        <begin position="1"/>
        <end position="312"/>
    </location>
</feature>
<feature type="active site" evidence="1">
    <location>
        <position position="227"/>
    </location>
</feature>
<feature type="active site" description="Proton donor" evidence="1">
    <location>
        <position position="275"/>
    </location>
</feature>
<name>GHRA_SALSV</name>
<comment type="function">
    <text evidence="1">Catalyzes the NADPH-dependent reduction of glyoxylate and hydroxypyruvate into glycolate and glycerate, respectively.</text>
</comment>
<comment type="catalytic activity">
    <reaction evidence="1">
        <text>glycolate + NADP(+) = glyoxylate + NADPH + H(+)</text>
        <dbReference type="Rhea" id="RHEA:10992"/>
        <dbReference type="ChEBI" id="CHEBI:15378"/>
        <dbReference type="ChEBI" id="CHEBI:29805"/>
        <dbReference type="ChEBI" id="CHEBI:36655"/>
        <dbReference type="ChEBI" id="CHEBI:57783"/>
        <dbReference type="ChEBI" id="CHEBI:58349"/>
        <dbReference type="EC" id="1.1.1.79"/>
    </reaction>
</comment>
<comment type="catalytic activity">
    <reaction evidence="1">
        <text>(R)-glycerate + NAD(+) = 3-hydroxypyruvate + NADH + H(+)</text>
        <dbReference type="Rhea" id="RHEA:17905"/>
        <dbReference type="ChEBI" id="CHEBI:15378"/>
        <dbReference type="ChEBI" id="CHEBI:16659"/>
        <dbReference type="ChEBI" id="CHEBI:17180"/>
        <dbReference type="ChEBI" id="CHEBI:57540"/>
        <dbReference type="ChEBI" id="CHEBI:57945"/>
        <dbReference type="EC" id="1.1.1.81"/>
    </reaction>
</comment>
<comment type="catalytic activity">
    <reaction evidence="1">
        <text>(R)-glycerate + NADP(+) = 3-hydroxypyruvate + NADPH + H(+)</text>
        <dbReference type="Rhea" id="RHEA:18657"/>
        <dbReference type="ChEBI" id="CHEBI:15378"/>
        <dbReference type="ChEBI" id="CHEBI:16659"/>
        <dbReference type="ChEBI" id="CHEBI:17180"/>
        <dbReference type="ChEBI" id="CHEBI:57783"/>
        <dbReference type="ChEBI" id="CHEBI:58349"/>
        <dbReference type="EC" id="1.1.1.81"/>
    </reaction>
</comment>
<comment type="subcellular location">
    <subcellularLocation>
        <location evidence="1">Cytoplasm</location>
    </subcellularLocation>
</comment>
<comment type="similarity">
    <text evidence="1">Belongs to the D-isomer specific 2-hydroxyacid dehydrogenase family. GhrA subfamily.</text>
</comment>
<accession>B4TSP5</accession>
<sequence>MEIIFYHPTFNAAWWVNALEKALPHARVREWKVGDNNPADYALVWQPPVEMLAGRRLKAVFALGAGVDAILSKLNAHPEMLDASIPLFRLEDTGMGLQMQEYAVSQVLHWFRRFDDYQALKNQALWKPLPEYTREEFSVGIMGAGVLGAKVAESLQAWGFPLRCWSRSRKSWPGVESYVGREELRAFLNQTRVLINLLPNTAQTVGIINSELLDQLPDGAYVLNLARGVHVQEADLLAALDSGKLKGAMLDVFSQEPLPQESPLWRHPRVAMTPHIAAVTRPAEAIDYISRTITQLEKGEPVTGQVDRARGY</sequence>
<keyword id="KW-0963">Cytoplasm</keyword>
<keyword id="KW-0520">NAD</keyword>
<keyword id="KW-0521">NADP</keyword>
<keyword id="KW-0560">Oxidoreductase</keyword>
<evidence type="ECO:0000255" key="1">
    <source>
        <dbReference type="HAMAP-Rule" id="MF_01666"/>
    </source>
</evidence>
<protein>
    <recommendedName>
        <fullName evidence="1">Glyoxylate/hydroxypyruvate reductase A</fullName>
        <ecNumber evidence="1">1.1.1.79</ecNumber>
        <ecNumber evidence="1">1.1.1.81</ecNumber>
    </recommendedName>
    <alternativeName>
        <fullName evidence="1">2-ketoacid reductase</fullName>
    </alternativeName>
</protein>
<proteinExistence type="inferred from homology"/>
<organism>
    <name type="scientific">Salmonella schwarzengrund (strain CVM19633)</name>
    <dbReference type="NCBI Taxonomy" id="439843"/>
    <lineage>
        <taxon>Bacteria</taxon>
        <taxon>Pseudomonadati</taxon>
        <taxon>Pseudomonadota</taxon>
        <taxon>Gammaproteobacteria</taxon>
        <taxon>Enterobacterales</taxon>
        <taxon>Enterobacteriaceae</taxon>
        <taxon>Salmonella</taxon>
    </lineage>
</organism>
<reference key="1">
    <citation type="journal article" date="2011" name="J. Bacteriol.">
        <title>Comparative genomics of 28 Salmonella enterica isolates: evidence for CRISPR-mediated adaptive sublineage evolution.</title>
        <authorList>
            <person name="Fricke W.F."/>
            <person name="Mammel M.K."/>
            <person name="McDermott P.F."/>
            <person name="Tartera C."/>
            <person name="White D.G."/>
            <person name="Leclerc J.E."/>
            <person name="Ravel J."/>
            <person name="Cebula T.A."/>
        </authorList>
    </citation>
    <scope>NUCLEOTIDE SEQUENCE [LARGE SCALE GENOMIC DNA]</scope>
    <source>
        <strain>CVM19633</strain>
    </source>
</reference>
<dbReference type="EC" id="1.1.1.79" evidence="1"/>
<dbReference type="EC" id="1.1.1.81" evidence="1"/>
<dbReference type="EMBL" id="CP001127">
    <property type="protein sequence ID" value="ACF89061.1"/>
    <property type="molecule type" value="Genomic_DNA"/>
</dbReference>
<dbReference type="RefSeq" id="WP_000402552.1">
    <property type="nucleotide sequence ID" value="NC_011094.1"/>
</dbReference>
<dbReference type="SMR" id="B4TSP5"/>
<dbReference type="KEGG" id="sew:SeSA_A1200"/>
<dbReference type="HOGENOM" id="CLU_019796_1_0_6"/>
<dbReference type="Proteomes" id="UP000001865">
    <property type="component" value="Chromosome"/>
</dbReference>
<dbReference type="GO" id="GO:0005737">
    <property type="term" value="C:cytoplasm"/>
    <property type="evidence" value="ECO:0007669"/>
    <property type="project" value="UniProtKB-SubCell"/>
</dbReference>
<dbReference type="GO" id="GO:0030267">
    <property type="term" value="F:glyoxylate reductase (NADPH) activity"/>
    <property type="evidence" value="ECO:0007669"/>
    <property type="project" value="UniProtKB-UniRule"/>
</dbReference>
<dbReference type="GO" id="GO:0008465">
    <property type="term" value="F:hydroxypyruvate reductase (NADH) activity"/>
    <property type="evidence" value="ECO:0007669"/>
    <property type="project" value="RHEA"/>
</dbReference>
<dbReference type="GO" id="GO:0120509">
    <property type="term" value="F:hydroxypyruvate reductase (NADPH) activity"/>
    <property type="evidence" value="ECO:0007669"/>
    <property type="project" value="RHEA"/>
</dbReference>
<dbReference type="GO" id="GO:0051287">
    <property type="term" value="F:NAD binding"/>
    <property type="evidence" value="ECO:0007669"/>
    <property type="project" value="InterPro"/>
</dbReference>
<dbReference type="CDD" id="cd12164">
    <property type="entry name" value="GDH_like_2"/>
    <property type="match status" value="1"/>
</dbReference>
<dbReference type="FunFam" id="3.40.50.720:FF:000110">
    <property type="entry name" value="Glyoxylate/hydroxypyruvate reductase A"/>
    <property type="match status" value="1"/>
</dbReference>
<dbReference type="Gene3D" id="3.40.50.720">
    <property type="entry name" value="NAD(P)-binding Rossmann-like Domain"/>
    <property type="match status" value="2"/>
</dbReference>
<dbReference type="HAMAP" id="MF_01666">
    <property type="entry name" value="2_Hacid_dh_C_GhrA"/>
    <property type="match status" value="1"/>
</dbReference>
<dbReference type="InterPro" id="IPR006140">
    <property type="entry name" value="D-isomer_DH_NAD-bd"/>
</dbReference>
<dbReference type="InterPro" id="IPR023514">
    <property type="entry name" value="GhrA_Enterobacterales"/>
</dbReference>
<dbReference type="InterPro" id="IPR036291">
    <property type="entry name" value="NAD(P)-bd_dom_sf"/>
</dbReference>
<dbReference type="NCBIfam" id="NF012013">
    <property type="entry name" value="PRK15469.1"/>
    <property type="match status" value="1"/>
</dbReference>
<dbReference type="PANTHER" id="PTHR43333">
    <property type="entry name" value="2-HACID_DH_C DOMAIN-CONTAINING PROTEIN"/>
    <property type="match status" value="1"/>
</dbReference>
<dbReference type="PANTHER" id="PTHR43333:SF1">
    <property type="entry name" value="D-ISOMER SPECIFIC 2-HYDROXYACID DEHYDROGENASE NAD-BINDING DOMAIN-CONTAINING PROTEIN"/>
    <property type="match status" value="1"/>
</dbReference>
<dbReference type="Pfam" id="PF02826">
    <property type="entry name" value="2-Hacid_dh_C"/>
    <property type="match status" value="1"/>
</dbReference>
<dbReference type="SUPFAM" id="SSF51735">
    <property type="entry name" value="NAD(P)-binding Rossmann-fold domains"/>
    <property type="match status" value="1"/>
</dbReference>
<gene>
    <name evidence="1" type="primary">ghrA</name>
    <name type="ordered locus">SeSA_A1200</name>
</gene>